<organism>
    <name type="scientific">Psychromonas ingrahamii (strain DSM 17664 / CCUG 51855 / 37)</name>
    <dbReference type="NCBI Taxonomy" id="357804"/>
    <lineage>
        <taxon>Bacteria</taxon>
        <taxon>Pseudomonadati</taxon>
        <taxon>Pseudomonadota</taxon>
        <taxon>Gammaproteobacteria</taxon>
        <taxon>Alteromonadales</taxon>
        <taxon>Psychromonadaceae</taxon>
        <taxon>Psychromonas</taxon>
    </lineage>
</organism>
<feature type="chain" id="PRO_0000307541" description="Triosephosphate isomerase">
    <location>
        <begin position="1"/>
        <end position="250"/>
    </location>
</feature>
<feature type="active site" description="Electrophile" evidence="1">
    <location>
        <position position="95"/>
    </location>
</feature>
<feature type="active site" description="Proton acceptor" evidence="1">
    <location>
        <position position="167"/>
    </location>
</feature>
<feature type="binding site" evidence="1">
    <location>
        <begin position="9"/>
        <end position="11"/>
    </location>
    <ligand>
        <name>substrate</name>
    </ligand>
</feature>
<feature type="binding site" evidence="1">
    <location>
        <position position="173"/>
    </location>
    <ligand>
        <name>substrate</name>
    </ligand>
</feature>
<feature type="binding site" evidence="1">
    <location>
        <position position="212"/>
    </location>
    <ligand>
        <name>substrate</name>
    </ligand>
</feature>
<feature type="binding site" evidence="1">
    <location>
        <begin position="233"/>
        <end position="234"/>
    </location>
    <ligand>
        <name>substrate</name>
    </ligand>
</feature>
<keyword id="KW-0963">Cytoplasm</keyword>
<keyword id="KW-0312">Gluconeogenesis</keyword>
<keyword id="KW-0324">Glycolysis</keyword>
<keyword id="KW-0413">Isomerase</keyword>
<keyword id="KW-1185">Reference proteome</keyword>
<protein>
    <recommendedName>
        <fullName evidence="1">Triosephosphate isomerase</fullName>
        <shortName evidence="1">TIM</shortName>
        <shortName evidence="1">TPI</shortName>
        <ecNumber evidence="1">5.3.1.1</ecNumber>
    </recommendedName>
    <alternativeName>
        <fullName evidence="1">Triose-phosphate isomerase</fullName>
    </alternativeName>
</protein>
<evidence type="ECO:0000255" key="1">
    <source>
        <dbReference type="HAMAP-Rule" id="MF_00147"/>
    </source>
</evidence>
<sequence length="250" mass="26360">MRTPLVMGNWKLNGTKESVSALIKGIEAAADAAKNVEVAVCPPTIFIEQVANLVANNSIELGAQDVSTNISGAFTGETSPVMVKEFGAKYSLVGHSERRQYHNETDAVVAAKFVAIQANGLVPVLCIGETLEERETDKTFNVVETQLKAVIDVSGIDALENAVIAYEPVWAIGTGKVASSEQAQDVHAHIRTWLAEQSKVVAAKVQILYGGSVKASSAKELFAQPDIDGGLVGGAALLVEEFVGIIEGAK</sequence>
<proteinExistence type="inferred from homology"/>
<accession>A1SWS5</accession>
<dbReference type="EC" id="5.3.1.1" evidence="1"/>
<dbReference type="EMBL" id="CP000510">
    <property type="protein sequence ID" value="ABM03940.1"/>
    <property type="molecule type" value="Genomic_DNA"/>
</dbReference>
<dbReference type="RefSeq" id="WP_011770500.1">
    <property type="nucleotide sequence ID" value="NC_008709.1"/>
</dbReference>
<dbReference type="SMR" id="A1SWS5"/>
<dbReference type="STRING" id="357804.Ping_2199"/>
<dbReference type="KEGG" id="pin:Ping_2199"/>
<dbReference type="eggNOG" id="COG0149">
    <property type="taxonomic scope" value="Bacteria"/>
</dbReference>
<dbReference type="HOGENOM" id="CLU_024251_2_3_6"/>
<dbReference type="OrthoDB" id="9809429at2"/>
<dbReference type="UniPathway" id="UPA00109">
    <property type="reaction ID" value="UER00189"/>
</dbReference>
<dbReference type="UniPathway" id="UPA00138"/>
<dbReference type="Proteomes" id="UP000000639">
    <property type="component" value="Chromosome"/>
</dbReference>
<dbReference type="GO" id="GO:0005829">
    <property type="term" value="C:cytosol"/>
    <property type="evidence" value="ECO:0007669"/>
    <property type="project" value="TreeGrafter"/>
</dbReference>
<dbReference type="GO" id="GO:0004807">
    <property type="term" value="F:triose-phosphate isomerase activity"/>
    <property type="evidence" value="ECO:0007669"/>
    <property type="project" value="UniProtKB-UniRule"/>
</dbReference>
<dbReference type="GO" id="GO:0006094">
    <property type="term" value="P:gluconeogenesis"/>
    <property type="evidence" value="ECO:0007669"/>
    <property type="project" value="UniProtKB-UniRule"/>
</dbReference>
<dbReference type="GO" id="GO:0046166">
    <property type="term" value="P:glyceraldehyde-3-phosphate biosynthetic process"/>
    <property type="evidence" value="ECO:0007669"/>
    <property type="project" value="TreeGrafter"/>
</dbReference>
<dbReference type="GO" id="GO:0019563">
    <property type="term" value="P:glycerol catabolic process"/>
    <property type="evidence" value="ECO:0007669"/>
    <property type="project" value="TreeGrafter"/>
</dbReference>
<dbReference type="GO" id="GO:0006096">
    <property type="term" value="P:glycolytic process"/>
    <property type="evidence" value="ECO:0007669"/>
    <property type="project" value="UniProtKB-UniRule"/>
</dbReference>
<dbReference type="CDD" id="cd00311">
    <property type="entry name" value="TIM"/>
    <property type="match status" value="1"/>
</dbReference>
<dbReference type="FunFam" id="3.20.20.70:FF:000020">
    <property type="entry name" value="Triosephosphate isomerase"/>
    <property type="match status" value="1"/>
</dbReference>
<dbReference type="Gene3D" id="3.20.20.70">
    <property type="entry name" value="Aldolase class I"/>
    <property type="match status" value="1"/>
</dbReference>
<dbReference type="HAMAP" id="MF_00147_B">
    <property type="entry name" value="TIM_B"/>
    <property type="match status" value="1"/>
</dbReference>
<dbReference type="InterPro" id="IPR013785">
    <property type="entry name" value="Aldolase_TIM"/>
</dbReference>
<dbReference type="InterPro" id="IPR035990">
    <property type="entry name" value="TIM_sf"/>
</dbReference>
<dbReference type="InterPro" id="IPR022896">
    <property type="entry name" value="TrioseP_Isoase_bac/euk"/>
</dbReference>
<dbReference type="InterPro" id="IPR000652">
    <property type="entry name" value="Triosephosphate_isomerase"/>
</dbReference>
<dbReference type="InterPro" id="IPR020861">
    <property type="entry name" value="Triosephosphate_isomerase_AS"/>
</dbReference>
<dbReference type="NCBIfam" id="TIGR00419">
    <property type="entry name" value="tim"/>
    <property type="match status" value="1"/>
</dbReference>
<dbReference type="PANTHER" id="PTHR21139">
    <property type="entry name" value="TRIOSEPHOSPHATE ISOMERASE"/>
    <property type="match status" value="1"/>
</dbReference>
<dbReference type="PANTHER" id="PTHR21139:SF42">
    <property type="entry name" value="TRIOSEPHOSPHATE ISOMERASE"/>
    <property type="match status" value="1"/>
</dbReference>
<dbReference type="Pfam" id="PF00121">
    <property type="entry name" value="TIM"/>
    <property type="match status" value="1"/>
</dbReference>
<dbReference type="SUPFAM" id="SSF51351">
    <property type="entry name" value="Triosephosphate isomerase (TIM)"/>
    <property type="match status" value="1"/>
</dbReference>
<dbReference type="PROSITE" id="PS00171">
    <property type="entry name" value="TIM_1"/>
    <property type="match status" value="1"/>
</dbReference>
<dbReference type="PROSITE" id="PS51440">
    <property type="entry name" value="TIM_2"/>
    <property type="match status" value="1"/>
</dbReference>
<name>TPIS_PSYIN</name>
<gene>
    <name evidence="1" type="primary">tpiA</name>
    <name type="ordered locus">Ping_2199</name>
</gene>
<reference key="1">
    <citation type="journal article" date="2008" name="BMC Genomics">
        <title>Genomics of an extreme psychrophile, Psychromonas ingrahamii.</title>
        <authorList>
            <person name="Riley M."/>
            <person name="Staley J.T."/>
            <person name="Danchin A."/>
            <person name="Wang T.Z."/>
            <person name="Brettin T.S."/>
            <person name="Hauser L.J."/>
            <person name="Land M.L."/>
            <person name="Thompson L.S."/>
        </authorList>
    </citation>
    <scope>NUCLEOTIDE SEQUENCE [LARGE SCALE GENOMIC DNA]</scope>
    <source>
        <strain>DSM 17664 / CCUG 51855 / 37</strain>
    </source>
</reference>
<comment type="function">
    <text evidence="1">Involved in the gluconeogenesis. Catalyzes stereospecifically the conversion of dihydroxyacetone phosphate (DHAP) to D-glyceraldehyde-3-phosphate (G3P).</text>
</comment>
<comment type="catalytic activity">
    <reaction evidence="1">
        <text>D-glyceraldehyde 3-phosphate = dihydroxyacetone phosphate</text>
        <dbReference type="Rhea" id="RHEA:18585"/>
        <dbReference type="ChEBI" id="CHEBI:57642"/>
        <dbReference type="ChEBI" id="CHEBI:59776"/>
        <dbReference type="EC" id="5.3.1.1"/>
    </reaction>
</comment>
<comment type="pathway">
    <text evidence="1">Carbohydrate biosynthesis; gluconeogenesis.</text>
</comment>
<comment type="pathway">
    <text evidence="1">Carbohydrate degradation; glycolysis; D-glyceraldehyde 3-phosphate from glycerone phosphate: step 1/1.</text>
</comment>
<comment type="subunit">
    <text evidence="1">Homodimer.</text>
</comment>
<comment type="subcellular location">
    <subcellularLocation>
        <location evidence="1">Cytoplasm</location>
    </subcellularLocation>
</comment>
<comment type="similarity">
    <text evidence="1">Belongs to the triosephosphate isomerase family.</text>
</comment>